<dbReference type="EMBL" id="CP000724">
    <property type="protein sequence ID" value="ABR48325.1"/>
    <property type="status" value="ALT_INIT"/>
    <property type="molecule type" value="Genomic_DNA"/>
</dbReference>
<dbReference type="RefSeq" id="WP_041720658.1">
    <property type="nucleotide sequence ID" value="NC_009633.1"/>
</dbReference>
<dbReference type="SMR" id="A6TQ57"/>
<dbReference type="STRING" id="293826.Amet_2166"/>
<dbReference type="KEGG" id="amt:Amet_2166"/>
<dbReference type="eggNOG" id="ENOG5033AUF">
    <property type="taxonomic scope" value="Bacteria"/>
</dbReference>
<dbReference type="HOGENOM" id="CLU_191960_2_0_9"/>
<dbReference type="OrthoDB" id="1683648at2"/>
<dbReference type="Proteomes" id="UP000001572">
    <property type="component" value="Chromosome"/>
</dbReference>
<dbReference type="GO" id="GO:0042601">
    <property type="term" value="C:endospore-forming forespore"/>
    <property type="evidence" value="ECO:0007669"/>
    <property type="project" value="InterPro"/>
</dbReference>
<dbReference type="GO" id="GO:0030436">
    <property type="term" value="P:asexual sporulation"/>
    <property type="evidence" value="ECO:0007669"/>
    <property type="project" value="InterPro"/>
</dbReference>
<dbReference type="GO" id="GO:0030435">
    <property type="term" value="P:sporulation resulting in formation of a cellular spore"/>
    <property type="evidence" value="ECO:0007669"/>
    <property type="project" value="UniProtKB-KW"/>
</dbReference>
<dbReference type="HAMAP" id="MF_00667">
    <property type="entry name" value="SspH"/>
    <property type="match status" value="1"/>
</dbReference>
<dbReference type="InterPro" id="IPR012610">
    <property type="entry name" value="SASP_SspH"/>
</dbReference>
<dbReference type="NCBIfam" id="TIGR02861">
    <property type="entry name" value="SASP_H"/>
    <property type="match status" value="1"/>
</dbReference>
<dbReference type="Pfam" id="PF08141">
    <property type="entry name" value="SspH"/>
    <property type="match status" value="1"/>
</dbReference>
<proteinExistence type="inferred from homology"/>
<keyword id="KW-1185">Reference proteome</keyword>
<keyword id="KW-0749">Sporulation</keyword>
<protein>
    <recommendedName>
        <fullName evidence="1">Small, acid-soluble spore protein H</fullName>
        <shortName evidence="1">SASP H</shortName>
    </recommendedName>
</protein>
<comment type="subcellular location">
    <subcellularLocation>
        <location evidence="1">Spore core</location>
    </subcellularLocation>
</comment>
<comment type="similarity">
    <text evidence="1">Belongs to the SspH family.</text>
</comment>
<comment type="sequence caution" evidence="2">
    <conflict type="erroneous initiation">
        <sequence resource="EMBL-CDS" id="ABR48325"/>
    </conflict>
</comment>
<name>SSPH_ALKMQ</name>
<feature type="chain" id="PRO_0000329122" description="Small, acid-soluble spore protein H">
    <location>
        <begin position="1"/>
        <end position="59"/>
    </location>
</feature>
<gene>
    <name evidence="1" type="primary">sspH</name>
    <name type="ordered locus">Amet_2166</name>
</gene>
<evidence type="ECO:0000255" key="1">
    <source>
        <dbReference type="HAMAP-Rule" id="MF_00667"/>
    </source>
</evidence>
<evidence type="ECO:0000305" key="2"/>
<sequence length="59" mass="6779">MDKTRAQEIISSPNMISVTYNGKEIYIENVNENTQTANIHLLNKPDKKQEVPLNNLVEH</sequence>
<organism>
    <name type="scientific">Alkaliphilus metalliredigens (strain QYMF)</name>
    <dbReference type="NCBI Taxonomy" id="293826"/>
    <lineage>
        <taxon>Bacteria</taxon>
        <taxon>Bacillati</taxon>
        <taxon>Bacillota</taxon>
        <taxon>Clostridia</taxon>
        <taxon>Peptostreptococcales</taxon>
        <taxon>Natronincolaceae</taxon>
        <taxon>Alkaliphilus</taxon>
    </lineage>
</organism>
<reference key="1">
    <citation type="journal article" date="2016" name="Genome Announc.">
        <title>Complete genome sequence of Alkaliphilus metalliredigens strain QYMF, an alkaliphilic and metal-reducing bacterium isolated from borax-contaminated leachate ponds.</title>
        <authorList>
            <person name="Hwang C."/>
            <person name="Copeland A."/>
            <person name="Lucas S."/>
            <person name="Lapidus A."/>
            <person name="Barry K."/>
            <person name="Detter J.C."/>
            <person name="Glavina Del Rio T."/>
            <person name="Hammon N."/>
            <person name="Israni S."/>
            <person name="Dalin E."/>
            <person name="Tice H."/>
            <person name="Pitluck S."/>
            <person name="Chertkov O."/>
            <person name="Brettin T."/>
            <person name="Bruce D."/>
            <person name="Han C."/>
            <person name="Schmutz J."/>
            <person name="Larimer F."/>
            <person name="Land M.L."/>
            <person name="Hauser L."/>
            <person name="Kyrpides N."/>
            <person name="Mikhailova N."/>
            <person name="Ye Q."/>
            <person name="Zhou J."/>
            <person name="Richardson P."/>
            <person name="Fields M.W."/>
        </authorList>
    </citation>
    <scope>NUCLEOTIDE SEQUENCE [LARGE SCALE GENOMIC DNA]</scope>
    <source>
        <strain>QYMF</strain>
    </source>
</reference>
<accession>A6TQ57</accession>